<reference key="1">
    <citation type="online journal article" date="1996" name="Plant Gene Register">
        <title>A cDNA encoding carbamoyl phosphate synthetase large subunit (carB) from Arabidopsis.</title>
        <authorList>
            <person name="Williamson C.L."/>
            <person name="Lake M.R."/>
            <person name="Slocum R.D."/>
        </authorList>
        <locator>PGR96-055</locator>
    </citation>
    <scope>NUCLEOTIDE SEQUENCE [MRNA]</scope>
    <source>
        <strain>cv. Columbia</strain>
        <tissue>Leaf</tissue>
    </source>
</reference>
<reference key="2">
    <citation type="journal article" date="2000" name="Nature">
        <title>Sequence and analysis of chromosome 1 of the plant Arabidopsis thaliana.</title>
        <authorList>
            <person name="Theologis A."/>
            <person name="Ecker J.R."/>
            <person name="Palm C.J."/>
            <person name="Federspiel N.A."/>
            <person name="Kaul S."/>
            <person name="White O."/>
            <person name="Alonso J."/>
            <person name="Altafi H."/>
            <person name="Araujo R."/>
            <person name="Bowman C.L."/>
            <person name="Brooks S.Y."/>
            <person name="Buehler E."/>
            <person name="Chan A."/>
            <person name="Chao Q."/>
            <person name="Chen H."/>
            <person name="Cheuk R.F."/>
            <person name="Chin C.W."/>
            <person name="Chung M.K."/>
            <person name="Conn L."/>
            <person name="Conway A.B."/>
            <person name="Conway A.R."/>
            <person name="Creasy T.H."/>
            <person name="Dewar K."/>
            <person name="Dunn P."/>
            <person name="Etgu P."/>
            <person name="Feldblyum T.V."/>
            <person name="Feng J.-D."/>
            <person name="Fong B."/>
            <person name="Fujii C.Y."/>
            <person name="Gill J.E."/>
            <person name="Goldsmith A.D."/>
            <person name="Haas B."/>
            <person name="Hansen N.F."/>
            <person name="Hughes B."/>
            <person name="Huizar L."/>
            <person name="Hunter J.L."/>
            <person name="Jenkins J."/>
            <person name="Johnson-Hopson C."/>
            <person name="Khan S."/>
            <person name="Khaykin E."/>
            <person name="Kim C.J."/>
            <person name="Koo H.L."/>
            <person name="Kremenetskaia I."/>
            <person name="Kurtz D.B."/>
            <person name="Kwan A."/>
            <person name="Lam B."/>
            <person name="Langin-Hooper S."/>
            <person name="Lee A."/>
            <person name="Lee J.M."/>
            <person name="Lenz C.A."/>
            <person name="Li J.H."/>
            <person name="Li Y.-P."/>
            <person name="Lin X."/>
            <person name="Liu S.X."/>
            <person name="Liu Z.A."/>
            <person name="Luros J.S."/>
            <person name="Maiti R."/>
            <person name="Marziali A."/>
            <person name="Militscher J."/>
            <person name="Miranda M."/>
            <person name="Nguyen M."/>
            <person name="Nierman W.C."/>
            <person name="Osborne B.I."/>
            <person name="Pai G."/>
            <person name="Peterson J."/>
            <person name="Pham P.K."/>
            <person name="Rizzo M."/>
            <person name="Rooney T."/>
            <person name="Rowley D."/>
            <person name="Sakano H."/>
            <person name="Salzberg S.L."/>
            <person name="Schwartz J.R."/>
            <person name="Shinn P."/>
            <person name="Southwick A.M."/>
            <person name="Sun H."/>
            <person name="Tallon L.J."/>
            <person name="Tambunga G."/>
            <person name="Toriumi M.J."/>
            <person name="Town C.D."/>
            <person name="Utterback T."/>
            <person name="Van Aken S."/>
            <person name="Vaysberg M."/>
            <person name="Vysotskaia V.S."/>
            <person name="Walker M."/>
            <person name="Wu D."/>
            <person name="Yu G."/>
            <person name="Fraser C.M."/>
            <person name="Venter J.C."/>
            <person name="Davis R.W."/>
        </authorList>
    </citation>
    <scope>NUCLEOTIDE SEQUENCE [LARGE SCALE GENOMIC DNA]</scope>
    <source>
        <strain>cv. Columbia</strain>
    </source>
</reference>
<reference key="3">
    <citation type="journal article" date="2017" name="Plant J.">
        <title>Araport11: a complete reannotation of the Arabidopsis thaliana reference genome.</title>
        <authorList>
            <person name="Cheng C.Y."/>
            <person name="Krishnakumar V."/>
            <person name="Chan A.P."/>
            <person name="Thibaud-Nissen F."/>
            <person name="Schobel S."/>
            <person name="Town C.D."/>
        </authorList>
    </citation>
    <scope>GENOME REANNOTATION</scope>
    <source>
        <strain>cv. Columbia</strain>
    </source>
</reference>
<reference key="4">
    <citation type="journal article" date="2003" name="Science">
        <title>Empirical analysis of transcriptional activity in the Arabidopsis genome.</title>
        <authorList>
            <person name="Yamada K."/>
            <person name="Lim J."/>
            <person name="Dale J.M."/>
            <person name="Chen H."/>
            <person name="Shinn P."/>
            <person name="Palm C.J."/>
            <person name="Southwick A.M."/>
            <person name="Wu H.C."/>
            <person name="Kim C.J."/>
            <person name="Nguyen M."/>
            <person name="Pham P.K."/>
            <person name="Cheuk R.F."/>
            <person name="Karlin-Newmann G."/>
            <person name="Liu S.X."/>
            <person name="Lam B."/>
            <person name="Sakano H."/>
            <person name="Wu T."/>
            <person name="Yu G."/>
            <person name="Miranda M."/>
            <person name="Quach H.L."/>
            <person name="Tripp M."/>
            <person name="Chang C.H."/>
            <person name="Lee J.M."/>
            <person name="Toriumi M.J."/>
            <person name="Chan M.M."/>
            <person name="Tang C.C."/>
            <person name="Onodera C.S."/>
            <person name="Deng J.M."/>
            <person name="Akiyama K."/>
            <person name="Ansari Y."/>
            <person name="Arakawa T."/>
            <person name="Banh J."/>
            <person name="Banno F."/>
            <person name="Bowser L."/>
            <person name="Brooks S.Y."/>
            <person name="Carninci P."/>
            <person name="Chao Q."/>
            <person name="Choy N."/>
            <person name="Enju A."/>
            <person name="Goldsmith A.D."/>
            <person name="Gurjal M."/>
            <person name="Hansen N.F."/>
            <person name="Hayashizaki Y."/>
            <person name="Johnson-Hopson C."/>
            <person name="Hsuan V.W."/>
            <person name="Iida K."/>
            <person name="Karnes M."/>
            <person name="Khan S."/>
            <person name="Koesema E."/>
            <person name="Ishida J."/>
            <person name="Jiang P.X."/>
            <person name="Jones T."/>
            <person name="Kawai J."/>
            <person name="Kamiya A."/>
            <person name="Meyers C."/>
            <person name="Nakajima M."/>
            <person name="Narusaka M."/>
            <person name="Seki M."/>
            <person name="Sakurai T."/>
            <person name="Satou M."/>
            <person name="Tamse R."/>
            <person name="Vaysberg M."/>
            <person name="Wallender E.K."/>
            <person name="Wong C."/>
            <person name="Yamamura Y."/>
            <person name="Yuan S."/>
            <person name="Shinozaki K."/>
            <person name="Davis R.W."/>
            <person name="Theologis A."/>
            <person name="Ecker J.R."/>
        </authorList>
    </citation>
    <scope>NUCLEOTIDE SEQUENCE [LARGE SCALE MRNA]</scope>
    <source>
        <strain>cv. Columbia</strain>
    </source>
</reference>
<reference key="5">
    <citation type="journal article" date="2005" name="Plant Physiol. Biochem.">
        <title>Effects of phosphate limitation on expression of genes involved in pyrimidine synthesis and salvaging in Arabidopsis.</title>
        <authorList>
            <person name="Hewitt M.M."/>
            <person name="Carr J.M."/>
            <person name="Williamson C.L."/>
            <person name="Slocum R.D."/>
        </authorList>
    </citation>
    <scope>TISSUE SPECIFICITY</scope>
    <scope>INDUCTION</scope>
</reference>
<reference key="6">
    <citation type="journal article" date="2007" name="Mol. Cell. Proteomics">
        <title>Multidimensional protein identification technology (MudPIT) analysis of ubiquitinated proteins in plants.</title>
        <authorList>
            <person name="Maor R."/>
            <person name="Jones A."/>
            <person name="Nuehse T.S."/>
            <person name="Studholme D.J."/>
            <person name="Peck S.C."/>
            <person name="Shirasu K."/>
        </authorList>
    </citation>
    <scope>IDENTIFICATION BY MASS SPECTROMETRY [LARGE SCALE ANALYSIS]</scope>
    <source>
        <strain>cv. Landsberg erecta</strain>
    </source>
</reference>
<reference key="7">
    <citation type="journal article" date="2011" name="Plant J.">
        <title>Analysis of ven3 and ven6 reticulate mutants reveals the importance of arginine biosynthesis in Arabidopsis leaf development.</title>
        <authorList>
            <person name="Molla-Morales A."/>
            <person name="Sarmiento-Manus R."/>
            <person name="Robles P."/>
            <person name="Quesada V."/>
            <person name="Perez-Perez J.M."/>
            <person name="Gonzalez-Bayon R."/>
            <person name="Hannah M.A."/>
            <person name="Willmitzer L."/>
            <person name="Ponce M.R."/>
            <person name="Micol J.L."/>
        </authorList>
    </citation>
    <scope>FUNCTION</scope>
    <scope>CATALYTIC ACTIVITY</scope>
    <scope>MUTAGENESIS OF PRO-149; GLY-587; ALA-844 AND PRO-1014</scope>
    <source>
        <strain>cv. Landsberg erecta</strain>
    </source>
</reference>
<comment type="function">
    <text evidence="7">Large subunit of the arginine-specific carbamoyl phosphate synthase (CPSase). CPSase catalyzes the formation of carbamoyl phosphate from the ammonia moiety of glutamine, hydrogencarbonate, and phosphate donated by ATP, constituting the first step of 2 biosynthetic pathways, one leading to arginine and/or urea and the other to pyrimidine nucleotides. The large subunit (synthetase) binds the substrates ammonia (free or transferred from glutamine from the small subunit), hydrogencarbonate and ATP and carries out an ATP-coupled ligase reaction, activating hydrogencarbonate by forming carboxy phosphate which reacts with ammonia to form carbamoyl phosphate. Required for mesophyll development.</text>
</comment>
<comment type="catalytic activity">
    <reaction evidence="10">
        <text>hydrogencarbonate + L-glutamine + 2 ATP + H2O = carbamoyl phosphate + L-glutamate + 2 ADP + phosphate + 2 H(+)</text>
        <dbReference type="Rhea" id="RHEA:18633"/>
        <dbReference type="ChEBI" id="CHEBI:15377"/>
        <dbReference type="ChEBI" id="CHEBI:15378"/>
        <dbReference type="ChEBI" id="CHEBI:17544"/>
        <dbReference type="ChEBI" id="CHEBI:29985"/>
        <dbReference type="ChEBI" id="CHEBI:30616"/>
        <dbReference type="ChEBI" id="CHEBI:43474"/>
        <dbReference type="ChEBI" id="CHEBI:58228"/>
        <dbReference type="ChEBI" id="CHEBI:58359"/>
        <dbReference type="ChEBI" id="CHEBI:456216"/>
        <dbReference type="EC" id="6.3.5.5"/>
    </reaction>
    <physiologicalReaction direction="right-to-left" evidence="10">
        <dbReference type="Rhea" id="RHEA:18635"/>
    </physiologicalReaction>
</comment>
<comment type="catalytic activity">
    <molecule>Carbamoyl phosphate synthase arginine-specific large chain, chloroplastic</molecule>
    <reaction evidence="2">
        <text>hydrogencarbonate + NH4(+) + 2 ATP = carbamoyl phosphate + 2 ADP + phosphate + 2 H(+)</text>
        <dbReference type="Rhea" id="RHEA:18029"/>
        <dbReference type="ChEBI" id="CHEBI:15378"/>
        <dbReference type="ChEBI" id="CHEBI:17544"/>
        <dbReference type="ChEBI" id="CHEBI:28938"/>
        <dbReference type="ChEBI" id="CHEBI:30616"/>
        <dbReference type="ChEBI" id="CHEBI:43474"/>
        <dbReference type="ChEBI" id="CHEBI:58228"/>
        <dbReference type="ChEBI" id="CHEBI:456216"/>
        <dbReference type="EC" id="6.3.4.16"/>
    </reaction>
</comment>
<comment type="cofactor">
    <cofactor evidence="4">
        <name>Mg(2+)</name>
        <dbReference type="ChEBI" id="CHEBI:18420"/>
    </cofactor>
    <cofactor evidence="4">
        <name>Mn(2+)</name>
        <dbReference type="ChEBI" id="CHEBI:29035"/>
    </cofactor>
    <text evidence="4">Binds 4 Mg(2+) or Mn(2+) ions per subunit.</text>
</comment>
<comment type="pathway">
    <text evidence="2">Amino-acid biosynthesis; L-arginine biosynthesis; carbamoyl phosphate from bicarbonate: step 1/1.</text>
</comment>
<comment type="subunit">
    <text evidence="2">Heterodimer composed of 2 chains; the small (or glutamine) chain promotes the hydrolysis of glutamine to ammonia, which is used by the large (or ammonia) chain to synthesize carbamoyl phosphate.</text>
</comment>
<comment type="subcellular location">
    <subcellularLocation>
        <location evidence="9">Plastid</location>
        <location evidence="9">Chloroplast</location>
    </subcellularLocation>
</comment>
<comment type="tissue specificity">
    <text evidence="6">Expressed in roots and leaves.</text>
</comment>
<comment type="induction">
    <text evidence="6">By phosphate starvation in shoot.</text>
</comment>
<comment type="domain">
    <text evidence="1">The large subunit is composed of 2 ATP-grasp domains that are involved in binding the 2 ATP molecules needed for carbamoyl phosphate synthesis. The N-terminal ATP-grasp domain (referred to as the carboxyphosphate synthetic component) catalyzes the ATP-dependent phosphorylation of hydrogencarbonate to carboxyphosphate and the subsequent nucleophilic attack by ammonia to form a carbamate intermediate. The C-terminal ATP-grasp domain (referred to as the carbamoyl phosphate synthetic component) then catalyzes the phosphorylation of carbamate with the second ATP to form the end product carbamoyl phosphate. The reactive and unstable enzyme intermediates are sequentially channeled from one active site to the next through the interior of the protein over a distance of at least 96 A.</text>
</comment>
<comment type="domain">
    <text evidence="2">The C-terminal MGS-like domain is required for catalytic function.</text>
</comment>
<comment type="miscellaneous">
    <text evidence="10">The ven3-1, ven3-2, ven3-3 and ven3-4 phenotypes are rescued by exogenous application of citrulline, an arginine precursor.</text>
</comment>
<comment type="similarity">
    <text evidence="9">Belongs to the CarB family.</text>
</comment>
<proteinExistence type="evidence at protein level"/>
<keyword id="KW-0028">Amino-acid biosynthesis</keyword>
<keyword id="KW-0055">Arginine biosynthesis</keyword>
<keyword id="KW-0067">ATP-binding</keyword>
<keyword id="KW-0150">Chloroplast</keyword>
<keyword id="KW-0436">Ligase</keyword>
<keyword id="KW-0460">Magnesium</keyword>
<keyword id="KW-0464">Manganese</keyword>
<keyword id="KW-0479">Metal-binding</keyword>
<keyword id="KW-0547">Nucleotide-binding</keyword>
<keyword id="KW-0934">Plastid</keyword>
<keyword id="KW-0665">Pyrimidine biosynthesis</keyword>
<keyword id="KW-1185">Reference proteome</keyword>
<keyword id="KW-0677">Repeat</keyword>
<keyword id="KW-0808">Transferase</keyword>
<keyword id="KW-0809">Transit peptide</keyword>
<gene>
    <name type="primary">CARB</name>
    <name evidence="8" type="synonym">VEN3</name>
    <name type="ordered locus">At1g29900</name>
    <name type="ORF">F1N18.6</name>
</gene>
<feature type="transit peptide" description="Chloroplast" evidence="3">
    <location>
        <begin position="1"/>
        <end position="62"/>
    </location>
</feature>
<feature type="chain" id="PRO_0000423076" description="Carbamoyl phosphate synthase arginine-specific large chain, chloroplastic">
    <location>
        <begin position="63"/>
        <end position="1187"/>
    </location>
</feature>
<feature type="domain" description="ATP-grasp 1" evidence="4">
    <location>
        <begin position="224"/>
        <end position="420"/>
    </location>
</feature>
<feature type="domain" description="ATP-grasp 2" evidence="4">
    <location>
        <begin position="782"/>
        <end position="975"/>
    </location>
</feature>
<feature type="domain" description="MGS-like" evidence="5">
    <location>
        <begin position="1042"/>
        <end position="1183"/>
    </location>
</feature>
<feature type="region of interest" description="Carboxyphosphate synthetic domain" evidence="1">
    <location>
        <begin position="93"/>
        <end position="494"/>
    </location>
</feature>
<feature type="region of interest" description="Oligomerization domain" evidence="1">
    <location>
        <begin position="495"/>
        <end position="644"/>
    </location>
</feature>
<feature type="region of interest" description="Carbamoyl phosphate synthetic domain" evidence="1">
    <location>
        <begin position="645"/>
        <end position="1040"/>
    </location>
</feature>
<feature type="region of interest" description="Allosteric domain" evidence="1">
    <location>
        <begin position="1041"/>
        <end position="1187"/>
    </location>
</feature>
<feature type="binding site" evidence="1">
    <location>
        <position position="220"/>
    </location>
    <ligand>
        <name>ATP</name>
        <dbReference type="ChEBI" id="CHEBI:30616"/>
        <label>1</label>
    </ligand>
</feature>
<feature type="binding site" evidence="1">
    <location>
        <position position="261"/>
    </location>
    <ligand>
        <name>ATP</name>
        <dbReference type="ChEBI" id="CHEBI:30616"/>
        <label>1</label>
    </ligand>
</feature>
<feature type="binding site" evidence="1">
    <location>
        <position position="267"/>
    </location>
    <ligand>
        <name>ATP</name>
        <dbReference type="ChEBI" id="CHEBI:30616"/>
        <label>1</label>
    </ligand>
</feature>
<feature type="binding site" evidence="1">
    <location>
        <position position="268"/>
    </location>
    <ligand>
        <name>ATP</name>
        <dbReference type="ChEBI" id="CHEBI:30616"/>
        <label>1</label>
    </ligand>
</feature>
<feature type="binding site" evidence="1">
    <location>
        <position position="300"/>
    </location>
    <ligand>
        <name>ATP</name>
        <dbReference type="ChEBI" id="CHEBI:30616"/>
        <label>1</label>
    </ligand>
</feature>
<feature type="binding site" evidence="1">
    <location>
        <position position="302"/>
    </location>
    <ligand>
        <name>ATP</name>
        <dbReference type="ChEBI" id="CHEBI:30616"/>
        <label>1</label>
    </ligand>
</feature>
<feature type="binding site" evidence="1">
    <location>
        <position position="307"/>
    </location>
    <ligand>
        <name>ATP</name>
        <dbReference type="ChEBI" id="CHEBI:30616"/>
        <label>1</label>
    </ligand>
</feature>
<feature type="binding site" evidence="1">
    <location>
        <position position="333"/>
    </location>
    <ligand>
        <name>ATP</name>
        <dbReference type="ChEBI" id="CHEBI:30616"/>
        <label>1</label>
    </ligand>
</feature>
<feature type="binding site" evidence="1">
    <location>
        <position position="334"/>
    </location>
    <ligand>
        <name>ATP</name>
        <dbReference type="ChEBI" id="CHEBI:30616"/>
        <label>1</label>
    </ligand>
</feature>
<feature type="binding site" evidence="1">
    <location>
        <position position="335"/>
    </location>
    <ligand>
        <name>ATP</name>
        <dbReference type="ChEBI" id="CHEBI:30616"/>
        <label>1</label>
    </ligand>
</feature>
<feature type="binding site" evidence="1">
    <location>
        <position position="377"/>
    </location>
    <ligand>
        <name>ATP</name>
        <dbReference type="ChEBI" id="CHEBI:30616"/>
        <label>1</label>
    </ligand>
</feature>
<feature type="binding site" evidence="4">
    <location>
        <position position="377"/>
    </location>
    <ligand>
        <name>Mg(2+)</name>
        <dbReference type="ChEBI" id="CHEBI:18420"/>
        <label>1</label>
    </ligand>
</feature>
<feature type="binding site" evidence="1">
    <location>
        <position position="391"/>
    </location>
    <ligand>
        <name>ATP</name>
        <dbReference type="ChEBI" id="CHEBI:30616"/>
        <label>1</label>
    </ligand>
</feature>
<feature type="binding site" evidence="4">
    <location>
        <position position="391"/>
    </location>
    <ligand>
        <name>Mg(2+)</name>
        <dbReference type="ChEBI" id="CHEBI:18420"/>
        <label>1</label>
    </ligand>
</feature>
<feature type="binding site" evidence="4">
    <location>
        <position position="391"/>
    </location>
    <ligand>
        <name>Mg(2+)</name>
        <dbReference type="ChEBI" id="CHEBI:18420"/>
        <label>2</label>
    </ligand>
</feature>
<feature type="binding site" evidence="4">
    <location>
        <position position="393"/>
    </location>
    <ligand>
        <name>Mg(2+)</name>
        <dbReference type="ChEBI" id="CHEBI:18420"/>
        <label>2</label>
    </ligand>
</feature>
<feature type="binding site" evidence="1">
    <location>
        <position position="818"/>
    </location>
    <ligand>
        <name>ATP</name>
        <dbReference type="ChEBI" id="CHEBI:30616"/>
        <label>2</label>
    </ligand>
</feature>
<feature type="binding site" evidence="1">
    <location>
        <position position="857"/>
    </location>
    <ligand>
        <name>ATP</name>
        <dbReference type="ChEBI" id="CHEBI:30616"/>
        <label>2</label>
    </ligand>
</feature>
<feature type="binding site" evidence="1">
    <location>
        <position position="859"/>
    </location>
    <ligand>
        <name>ATP</name>
        <dbReference type="ChEBI" id="CHEBI:30616"/>
        <label>2</label>
    </ligand>
</feature>
<feature type="binding site" evidence="1">
    <location>
        <position position="864"/>
    </location>
    <ligand>
        <name>ATP</name>
        <dbReference type="ChEBI" id="CHEBI:30616"/>
        <label>2</label>
    </ligand>
</feature>
<feature type="binding site" evidence="1">
    <location>
        <position position="890"/>
    </location>
    <ligand>
        <name>ATP</name>
        <dbReference type="ChEBI" id="CHEBI:30616"/>
        <label>2</label>
    </ligand>
</feature>
<feature type="binding site" evidence="1">
    <location>
        <position position="891"/>
    </location>
    <ligand>
        <name>ATP</name>
        <dbReference type="ChEBI" id="CHEBI:30616"/>
        <label>2</label>
    </ligand>
</feature>
<feature type="binding site" evidence="1">
    <location>
        <position position="892"/>
    </location>
    <ligand>
        <name>ATP</name>
        <dbReference type="ChEBI" id="CHEBI:30616"/>
        <label>2</label>
    </ligand>
</feature>
<feature type="binding site" evidence="1">
    <location>
        <position position="893"/>
    </location>
    <ligand>
        <name>ATP</name>
        <dbReference type="ChEBI" id="CHEBI:30616"/>
        <label>2</label>
    </ligand>
</feature>
<feature type="binding site" evidence="1">
    <location>
        <position position="933"/>
    </location>
    <ligand>
        <name>ATP</name>
        <dbReference type="ChEBI" id="CHEBI:30616"/>
        <label>2</label>
    </ligand>
</feature>
<feature type="binding site" evidence="4">
    <location>
        <position position="933"/>
    </location>
    <ligand>
        <name>Mg(2+)</name>
        <dbReference type="ChEBI" id="CHEBI:18420"/>
        <label>3</label>
    </ligand>
</feature>
<feature type="binding site" evidence="1">
    <location>
        <position position="946"/>
    </location>
    <ligand>
        <name>ATP</name>
        <dbReference type="ChEBI" id="CHEBI:30616"/>
        <label>2</label>
    </ligand>
</feature>
<feature type="binding site" evidence="4">
    <location>
        <position position="946"/>
    </location>
    <ligand>
        <name>Mg(2+)</name>
        <dbReference type="ChEBI" id="CHEBI:18420"/>
        <label>3</label>
    </ligand>
</feature>
<feature type="binding site" evidence="4">
    <location>
        <position position="946"/>
    </location>
    <ligand>
        <name>Mg(2+)</name>
        <dbReference type="ChEBI" id="CHEBI:18420"/>
        <label>4</label>
    </ligand>
</feature>
<feature type="binding site" evidence="4">
    <location>
        <position position="948"/>
    </location>
    <ligand>
        <name>Mg(2+)</name>
        <dbReference type="ChEBI" id="CHEBI:18420"/>
        <label>4</label>
    </ligand>
</feature>
<feature type="mutagenesis site" description="In ven3-2; reduced plant size and reticulate leaf phenotype." evidence="7">
    <original>P</original>
    <variation>L</variation>
    <location>
        <position position="149"/>
    </location>
</feature>
<feature type="mutagenesis site" description="In ven3-3; reticulate leaf phenotype." evidence="7">
    <original>G</original>
    <variation>E</variation>
    <location>
        <position position="587"/>
    </location>
</feature>
<feature type="mutagenesis site" description="In ven3-4; reduced plant size and reticulate leaf phenotype." evidence="7">
    <original>A</original>
    <variation>T</variation>
    <location>
        <position position="844"/>
    </location>
</feature>
<feature type="mutagenesis site" description="In ven3-1; reticulate leaf phenotype." evidence="7">
    <original>P</original>
    <variation>L</variation>
    <location>
        <position position="1014"/>
    </location>
</feature>
<protein>
    <recommendedName>
        <fullName evidence="9">Carbamoyl phosphate synthase arginine-specific large chain, chloroplastic</fullName>
        <shortName>CPS</shortName>
        <shortName>CPSase</shortName>
        <ecNumber evidence="2">6.3.4.16</ecNumber>
        <ecNumber evidence="10">6.3.5.5</ecNumber>
    </recommendedName>
    <alternativeName>
        <fullName>Ammonium-dependent carbamoyl phosphate synthetase</fullName>
    </alternativeName>
    <alternativeName>
        <fullName evidence="8">Arginine-specific carbamoyl phosphate synthetase, ammonia chain</fullName>
    </alternativeName>
    <alternativeName>
        <fullName>Glutamine-dependent carbamoyl phosphate synthetase</fullName>
    </alternativeName>
    <alternativeName>
        <fullName evidence="8">Protein VENOSA 3</fullName>
    </alternativeName>
</protein>
<name>CARB_ARATH</name>
<accession>Q42601</accession>
<evidence type="ECO:0000250" key="1">
    <source>
        <dbReference type="UniProtKB" id="P00968"/>
    </source>
</evidence>
<evidence type="ECO:0000250" key="2">
    <source>
        <dbReference type="UniProtKB" id="P03965"/>
    </source>
</evidence>
<evidence type="ECO:0000255" key="3"/>
<evidence type="ECO:0000255" key="4">
    <source>
        <dbReference type="PROSITE-ProRule" id="PRU00409"/>
    </source>
</evidence>
<evidence type="ECO:0000255" key="5">
    <source>
        <dbReference type="PROSITE-ProRule" id="PRU01202"/>
    </source>
</evidence>
<evidence type="ECO:0000269" key="6">
    <source>
    </source>
</evidence>
<evidence type="ECO:0000269" key="7">
    <source>
    </source>
</evidence>
<evidence type="ECO:0000303" key="8">
    <source>
    </source>
</evidence>
<evidence type="ECO:0000305" key="9"/>
<evidence type="ECO:0000305" key="10">
    <source>
    </source>
</evidence>
<dbReference type="EC" id="6.3.4.16" evidence="2"/>
<dbReference type="EC" id="6.3.5.5" evidence="10"/>
<dbReference type="EMBL" id="U40341">
    <property type="protein sequence ID" value="AAB67843.1"/>
    <property type="molecule type" value="mRNA"/>
</dbReference>
<dbReference type="EMBL" id="AC008030">
    <property type="protein sequence ID" value="AAG10606.1"/>
    <property type="molecule type" value="Genomic_DNA"/>
</dbReference>
<dbReference type="EMBL" id="CP002684">
    <property type="protein sequence ID" value="AEE31148.1"/>
    <property type="molecule type" value="Genomic_DNA"/>
</dbReference>
<dbReference type="EMBL" id="AF367268">
    <property type="protein sequence ID" value="AAK56257.1"/>
    <property type="molecule type" value="mRNA"/>
</dbReference>
<dbReference type="EMBL" id="AY133548">
    <property type="protein sequence ID" value="AAM91378.1"/>
    <property type="molecule type" value="mRNA"/>
</dbReference>
<dbReference type="PIR" id="F86422">
    <property type="entry name" value="F86422"/>
</dbReference>
<dbReference type="RefSeq" id="NP_564338.1">
    <property type="nucleotide sequence ID" value="NM_102730.2"/>
</dbReference>
<dbReference type="SMR" id="Q42601"/>
<dbReference type="BioGRID" id="25103">
    <property type="interactions" value="16"/>
</dbReference>
<dbReference type="FunCoup" id="Q42601">
    <property type="interactions" value="2842"/>
</dbReference>
<dbReference type="IntAct" id="Q42601">
    <property type="interactions" value="1"/>
</dbReference>
<dbReference type="STRING" id="3702.Q42601"/>
<dbReference type="iPTMnet" id="Q42601"/>
<dbReference type="MetOSite" id="Q42601"/>
<dbReference type="PaxDb" id="3702-AT1G29900.1"/>
<dbReference type="ProMEX" id="Q42601"/>
<dbReference type="ProteomicsDB" id="222801"/>
<dbReference type="EnsemblPlants" id="AT1G29900.1">
    <property type="protein sequence ID" value="AT1G29900.1"/>
    <property type="gene ID" value="AT1G29900"/>
</dbReference>
<dbReference type="GeneID" id="839868"/>
<dbReference type="Gramene" id="AT1G29900.1">
    <property type="protein sequence ID" value="AT1G29900.1"/>
    <property type="gene ID" value="AT1G29900"/>
</dbReference>
<dbReference type="KEGG" id="ath:AT1G29900"/>
<dbReference type="Araport" id="AT1G29900"/>
<dbReference type="TAIR" id="AT1G29900">
    <property type="gene designation" value="CARB"/>
</dbReference>
<dbReference type="eggNOG" id="KOG0370">
    <property type="taxonomic scope" value="Eukaryota"/>
</dbReference>
<dbReference type="HOGENOM" id="CLU_000513_1_0_1"/>
<dbReference type="InParanoid" id="Q42601"/>
<dbReference type="OMA" id="FPFNKFP"/>
<dbReference type="OrthoDB" id="434at2759"/>
<dbReference type="PhylomeDB" id="Q42601"/>
<dbReference type="BioCyc" id="ARA:AT1G29900-MONOMER"/>
<dbReference type="UniPathway" id="UPA00068">
    <property type="reaction ID" value="UER00171"/>
</dbReference>
<dbReference type="CD-CODE" id="4299E36E">
    <property type="entry name" value="Nucleolus"/>
</dbReference>
<dbReference type="PRO" id="PR:Q42601"/>
<dbReference type="Proteomes" id="UP000006548">
    <property type="component" value="Chromosome 1"/>
</dbReference>
<dbReference type="ExpressionAtlas" id="Q42601">
    <property type="expression patterns" value="baseline and differential"/>
</dbReference>
<dbReference type="GO" id="GO:0005951">
    <property type="term" value="C:carbamoyl-phosphate synthase complex"/>
    <property type="evidence" value="ECO:0000314"/>
    <property type="project" value="TAIR"/>
</dbReference>
<dbReference type="GO" id="GO:0009507">
    <property type="term" value="C:chloroplast"/>
    <property type="evidence" value="ECO:0007005"/>
    <property type="project" value="TAIR"/>
</dbReference>
<dbReference type="GO" id="GO:0009570">
    <property type="term" value="C:chloroplast stroma"/>
    <property type="evidence" value="ECO:0007005"/>
    <property type="project" value="TAIR"/>
</dbReference>
<dbReference type="GO" id="GO:0005524">
    <property type="term" value="F:ATP binding"/>
    <property type="evidence" value="ECO:0007669"/>
    <property type="project" value="UniProtKB-KW"/>
</dbReference>
<dbReference type="GO" id="GO:0004087">
    <property type="term" value="F:carbamoyl-phosphate synthase (ammonia) activity"/>
    <property type="evidence" value="ECO:0007669"/>
    <property type="project" value="RHEA"/>
</dbReference>
<dbReference type="GO" id="GO:0004088">
    <property type="term" value="F:carbamoyl-phosphate synthase (glutamine-hydrolyzing) activity"/>
    <property type="evidence" value="ECO:0000314"/>
    <property type="project" value="TAIR"/>
</dbReference>
<dbReference type="GO" id="GO:0046872">
    <property type="term" value="F:metal ion binding"/>
    <property type="evidence" value="ECO:0007669"/>
    <property type="project" value="UniProtKB-KW"/>
</dbReference>
<dbReference type="GO" id="GO:0016740">
    <property type="term" value="F:transferase activity"/>
    <property type="evidence" value="ECO:0007669"/>
    <property type="project" value="UniProtKB-KW"/>
</dbReference>
<dbReference type="GO" id="GO:0016036">
    <property type="term" value="P:cellular response to phosphate starvation"/>
    <property type="evidence" value="ECO:0000270"/>
    <property type="project" value="TAIR"/>
</dbReference>
<dbReference type="GO" id="GO:0006526">
    <property type="term" value="P:L-arginine biosynthetic process"/>
    <property type="evidence" value="ECO:0000303"/>
    <property type="project" value="TAIR"/>
</dbReference>
<dbReference type="GO" id="GO:0006221">
    <property type="term" value="P:pyrimidine nucleotide biosynthetic process"/>
    <property type="evidence" value="ECO:0007669"/>
    <property type="project" value="UniProtKB-KW"/>
</dbReference>
<dbReference type="CDD" id="cd01424">
    <property type="entry name" value="MGS_CPS_II"/>
    <property type="match status" value="1"/>
</dbReference>
<dbReference type="FunFam" id="1.10.1030.10:FF:000002">
    <property type="entry name" value="Carbamoyl-phosphate synthase large chain"/>
    <property type="match status" value="1"/>
</dbReference>
<dbReference type="FunFam" id="3.30.1490.20:FF:000001">
    <property type="entry name" value="Carbamoyl-phosphate synthase large chain"/>
    <property type="match status" value="1"/>
</dbReference>
<dbReference type="FunFam" id="3.30.470.20:FF:000007">
    <property type="entry name" value="Carbamoyl-phosphate synthase large chain"/>
    <property type="match status" value="1"/>
</dbReference>
<dbReference type="FunFam" id="3.30.470.20:FF:000013">
    <property type="entry name" value="Carbamoyl-phosphate synthase large chain"/>
    <property type="match status" value="1"/>
</dbReference>
<dbReference type="FunFam" id="3.40.50.1380:FF:000013">
    <property type="entry name" value="Carbamoyl-phosphate synthase large chain"/>
    <property type="match status" value="1"/>
</dbReference>
<dbReference type="FunFam" id="3.40.50.20:FF:000001">
    <property type="entry name" value="Carbamoyl-phosphate synthase large chain"/>
    <property type="match status" value="1"/>
</dbReference>
<dbReference type="FunFam" id="3.40.50.20:FF:000003">
    <property type="entry name" value="Carbamoyl-phosphate synthase large chain"/>
    <property type="match status" value="1"/>
</dbReference>
<dbReference type="Gene3D" id="3.40.50.20">
    <property type="match status" value="2"/>
</dbReference>
<dbReference type="Gene3D" id="3.30.1490.20">
    <property type="entry name" value="ATP-grasp fold, A domain"/>
    <property type="match status" value="1"/>
</dbReference>
<dbReference type="Gene3D" id="3.30.470.20">
    <property type="entry name" value="ATP-grasp fold, B domain"/>
    <property type="match status" value="2"/>
</dbReference>
<dbReference type="Gene3D" id="1.10.1030.10">
    <property type="entry name" value="Carbamoyl-phosphate synthetase, large subunit oligomerisation domain"/>
    <property type="match status" value="1"/>
</dbReference>
<dbReference type="Gene3D" id="3.40.50.1380">
    <property type="entry name" value="Methylglyoxal synthase-like domain"/>
    <property type="match status" value="1"/>
</dbReference>
<dbReference type="HAMAP" id="MF_01210_A">
    <property type="entry name" value="CPSase_L_chain_A"/>
    <property type="match status" value="1"/>
</dbReference>
<dbReference type="HAMAP" id="MF_01210_B">
    <property type="entry name" value="CPSase_L_chain_B"/>
    <property type="match status" value="1"/>
</dbReference>
<dbReference type="InterPro" id="IPR011761">
    <property type="entry name" value="ATP-grasp"/>
</dbReference>
<dbReference type="InterPro" id="IPR013815">
    <property type="entry name" value="ATP_grasp_subdomain_1"/>
</dbReference>
<dbReference type="InterPro" id="IPR006275">
    <property type="entry name" value="CarbamoylP_synth_lsu"/>
</dbReference>
<dbReference type="InterPro" id="IPR005480">
    <property type="entry name" value="CarbamoylP_synth_lsu_oligo"/>
</dbReference>
<dbReference type="InterPro" id="IPR036897">
    <property type="entry name" value="CarbamoylP_synth_lsu_oligo_sf"/>
</dbReference>
<dbReference type="InterPro" id="IPR005479">
    <property type="entry name" value="CbamoylP_synth_lsu-like_ATP-bd"/>
</dbReference>
<dbReference type="InterPro" id="IPR005483">
    <property type="entry name" value="CbamoylP_synth_lsu_CPSase_dom"/>
</dbReference>
<dbReference type="InterPro" id="IPR011607">
    <property type="entry name" value="MGS-like_dom"/>
</dbReference>
<dbReference type="InterPro" id="IPR036914">
    <property type="entry name" value="MGS-like_dom_sf"/>
</dbReference>
<dbReference type="InterPro" id="IPR033937">
    <property type="entry name" value="MGS_CPS_CarB"/>
</dbReference>
<dbReference type="InterPro" id="IPR016185">
    <property type="entry name" value="PreATP-grasp_dom_sf"/>
</dbReference>
<dbReference type="NCBIfam" id="TIGR01369">
    <property type="entry name" value="CPSaseII_lrg"/>
    <property type="match status" value="1"/>
</dbReference>
<dbReference type="NCBIfam" id="NF003671">
    <property type="entry name" value="PRK05294.1"/>
    <property type="match status" value="1"/>
</dbReference>
<dbReference type="NCBIfam" id="NF009455">
    <property type="entry name" value="PRK12815.1"/>
    <property type="match status" value="1"/>
</dbReference>
<dbReference type="PANTHER" id="PTHR11405:SF53">
    <property type="entry name" value="CARBAMOYL-PHOSPHATE SYNTHASE [AMMONIA], MITOCHONDRIAL"/>
    <property type="match status" value="1"/>
</dbReference>
<dbReference type="PANTHER" id="PTHR11405">
    <property type="entry name" value="CARBAMOYLTRANSFERASE FAMILY MEMBER"/>
    <property type="match status" value="1"/>
</dbReference>
<dbReference type="Pfam" id="PF02786">
    <property type="entry name" value="CPSase_L_D2"/>
    <property type="match status" value="2"/>
</dbReference>
<dbReference type="Pfam" id="PF02787">
    <property type="entry name" value="CPSase_L_D3"/>
    <property type="match status" value="1"/>
</dbReference>
<dbReference type="Pfam" id="PF02142">
    <property type="entry name" value="MGS"/>
    <property type="match status" value="1"/>
</dbReference>
<dbReference type="PRINTS" id="PR00098">
    <property type="entry name" value="CPSASE"/>
</dbReference>
<dbReference type="SMART" id="SM01096">
    <property type="entry name" value="CPSase_L_D3"/>
    <property type="match status" value="1"/>
</dbReference>
<dbReference type="SMART" id="SM00851">
    <property type="entry name" value="MGS"/>
    <property type="match status" value="1"/>
</dbReference>
<dbReference type="SUPFAM" id="SSF48108">
    <property type="entry name" value="Carbamoyl phosphate synthetase, large subunit connection domain"/>
    <property type="match status" value="1"/>
</dbReference>
<dbReference type="SUPFAM" id="SSF56059">
    <property type="entry name" value="Glutathione synthetase ATP-binding domain-like"/>
    <property type="match status" value="2"/>
</dbReference>
<dbReference type="SUPFAM" id="SSF52335">
    <property type="entry name" value="Methylglyoxal synthase-like"/>
    <property type="match status" value="1"/>
</dbReference>
<dbReference type="SUPFAM" id="SSF52440">
    <property type="entry name" value="PreATP-grasp domain"/>
    <property type="match status" value="2"/>
</dbReference>
<dbReference type="PROSITE" id="PS50975">
    <property type="entry name" value="ATP_GRASP"/>
    <property type="match status" value="2"/>
</dbReference>
<dbReference type="PROSITE" id="PS00866">
    <property type="entry name" value="CPSASE_1"/>
    <property type="match status" value="2"/>
</dbReference>
<dbReference type="PROSITE" id="PS00867">
    <property type="entry name" value="CPSASE_2"/>
    <property type="match status" value="2"/>
</dbReference>
<dbReference type="PROSITE" id="PS51855">
    <property type="entry name" value="MGS"/>
    <property type="match status" value="1"/>
</dbReference>
<organism>
    <name type="scientific">Arabidopsis thaliana</name>
    <name type="common">Mouse-ear cress</name>
    <dbReference type="NCBI Taxonomy" id="3702"/>
    <lineage>
        <taxon>Eukaryota</taxon>
        <taxon>Viridiplantae</taxon>
        <taxon>Streptophyta</taxon>
        <taxon>Embryophyta</taxon>
        <taxon>Tracheophyta</taxon>
        <taxon>Spermatophyta</taxon>
        <taxon>Magnoliopsida</taxon>
        <taxon>eudicotyledons</taxon>
        <taxon>Gunneridae</taxon>
        <taxon>Pentapetalae</taxon>
        <taxon>rosids</taxon>
        <taxon>malvids</taxon>
        <taxon>Brassicales</taxon>
        <taxon>Brassicaceae</taxon>
        <taxon>Camelineae</taxon>
        <taxon>Arabidopsis</taxon>
    </lineage>
</organism>
<sequence length="1187" mass="129957">MRNHCLELSSNCSSIFASSKSNPRFSPSKLSYSTFFSRSAIYYRSKPKQASSSSSFSTFPPCLNRKSSLTHVLKPVSELADTTTKPFSPEIVGKRTDLKKIMILGAGPIVIGQACEFDYSGTQACKALREEGYEVILINSNPATIMTDPETANRTYIAPMTPELVEQVIEKERPDALLPTMGGQTALNLAVALAESGALEKYGVELIGAKLGAIKKAEDRELFKDAMKNIGLKTPPSGIGTTLDECFDIAEKIGEFPLIIRPAFTLGGTGGGIAYNKEEFESICKSGLAASATSQVLVEKSLLGWKEYELEVMRDLADNVVIICSIENIDPMGVHTGDSITVAPAQTLTDREYQRLRDYSIAIIREIGVECGGSNVQFAVNPVDGEVMIIEMNPRVSRSSALASKATGFPIAKMAAKLSVGYTLDQIPNDITRKTPASFEPSIDYVVTKIPRFAFEKFPGSQPLLTTQMKSVGESMALGRTFQESFQKALRSLECGFSGWGCAKIKELDWDWDQLKYSLRVPNPDRIHAIYAAMKKGMKIDEIYELSMVDKWFLTQLKELVDVEQYLMSGTLSEITKEDLYEVKKRGFSDKQIAFATKTTEEEVRTKRISLGVVPSYKRVDTCAAEFEAHTPYMYSSYDVECESAPNNKKKVLILGGGPNRIGQGIEFDYCCCHTSFALQDAGYETIMLNSNPETVSTDYDTSDRLYFEPLTIEDVLNVIDLEKPDGIIVQFGGQTPLKLALPIKHYLDKHMPMSLSGAGPVRIWGTSPDSIDAAEDRERFNAILDELKIEQPKGGIAKSEADALAIAKEVGYPVVVRPSYVLGGRAMEIVYDDSRLITYLENAVQVDPERPVLVDKYLSDAIEIDVDTLTDSYGNVVIGGIMEHIEQAGVHSGDSACMLPTQTIPASCLQTIRTWTTKLAKKLNVCGLMNCQYAITTSGDVFLLEANPRASRTVPFVSKAIGHPLAKYAALVMSGKSLKDLNFEKEVIPKHVSVKEAVFPFEKFQGCDVILGPEMRSTGEVMSISSEFSSAFAMAQIAAGQKLPLSGTVFLSLNDMTKPHLEKIAVSFLELGFKIVATSGTAHFLELKGIPVERVLKLHEGRPHAADMVANGQIHLMLITSSGDALDQKDGRQLRQMALAYKVPVITTVAGALATAEGIKSLKSSAIKMTALQDFFEVKNVSSLLV</sequence>